<reference key="1">
    <citation type="submission" date="2009-01" db="EMBL/GenBank/DDBJ databases">
        <title>Complete sequence of chromosome of Arthrobacter chlorophenolicus A6.</title>
        <authorList>
            <consortium name="US DOE Joint Genome Institute"/>
            <person name="Lucas S."/>
            <person name="Copeland A."/>
            <person name="Lapidus A."/>
            <person name="Glavina del Rio T."/>
            <person name="Tice H."/>
            <person name="Bruce D."/>
            <person name="Goodwin L."/>
            <person name="Pitluck S."/>
            <person name="Goltsman E."/>
            <person name="Clum A."/>
            <person name="Larimer F."/>
            <person name="Land M."/>
            <person name="Hauser L."/>
            <person name="Kyrpides N."/>
            <person name="Mikhailova N."/>
            <person name="Jansson J."/>
            <person name="Richardson P."/>
        </authorList>
    </citation>
    <scope>NUCLEOTIDE SEQUENCE [LARGE SCALE GENOMIC DNA]</scope>
    <source>
        <strain>ATCC 700700 / DSM 12829 / CIP 107037 / JCM 12360 / KCTC 9906 / NCIMB 13794 / A6</strain>
    </source>
</reference>
<accession>B8HD04</accession>
<protein>
    <recommendedName>
        <fullName evidence="1">Large ribosomal subunit protein uL23</fullName>
    </recommendedName>
    <alternativeName>
        <fullName evidence="2">50S ribosomal protein L23</fullName>
    </alternativeName>
</protein>
<keyword id="KW-0687">Ribonucleoprotein</keyword>
<keyword id="KW-0689">Ribosomal protein</keyword>
<keyword id="KW-0694">RNA-binding</keyword>
<keyword id="KW-0699">rRNA-binding</keyword>
<dbReference type="EMBL" id="CP001341">
    <property type="protein sequence ID" value="ACL40650.1"/>
    <property type="molecule type" value="Genomic_DNA"/>
</dbReference>
<dbReference type="RefSeq" id="WP_011692807.1">
    <property type="nucleotide sequence ID" value="NC_011886.1"/>
</dbReference>
<dbReference type="SMR" id="B8HD04"/>
<dbReference type="STRING" id="452863.Achl_2685"/>
<dbReference type="KEGG" id="ach:Achl_2685"/>
<dbReference type="eggNOG" id="COG0089">
    <property type="taxonomic scope" value="Bacteria"/>
</dbReference>
<dbReference type="HOGENOM" id="CLU_037562_3_2_11"/>
<dbReference type="OrthoDB" id="9793353at2"/>
<dbReference type="Proteomes" id="UP000002505">
    <property type="component" value="Chromosome"/>
</dbReference>
<dbReference type="GO" id="GO:1990904">
    <property type="term" value="C:ribonucleoprotein complex"/>
    <property type="evidence" value="ECO:0007669"/>
    <property type="project" value="UniProtKB-KW"/>
</dbReference>
<dbReference type="GO" id="GO:0005840">
    <property type="term" value="C:ribosome"/>
    <property type="evidence" value="ECO:0007669"/>
    <property type="project" value="UniProtKB-KW"/>
</dbReference>
<dbReference type="GO" id="GO:0019843">
    <property type="term" value="F:rRNA binding"/>
    <property type="evidence" value="ECO:0007669"/>
    <property type="project" value="UniProtKB-UniRule"/>
</dbReference>
<dbReference type="GO" id="GO:0003735">
    <property type="term" value="F:structural constituent of ribosome"/>
    <property type="evidence" value="ECO:0007669"/>
    <property type="project" value="InterPro"/>
</dbReference>
<dbReference type="GO" id="GO:0006412">
    <property type="term" value="P:translation"/>
    <property type="evidence" value="ECO:0007669"/>
    <property type="project" value="UniProtKB-UniRule"/>
</dbReference>
<dbReference type="FunFam" id="3.30.70.330:FF:000001">
    <property type="entry name" value="50S ribosomal protein L23"/>
    <property type="match status" value="1"/>
</dbReference>
<dbReference type="Gene3D" id="3.30.70.330">
    <property type="match status" value="1"/>
</dbReference>
<dbReference type="HAMAP" id="MF_01369_B">
    <property type="entry name" value="Ribosomal_uL23_B"/>
    <property type="match status" value="1"/>
</dbReference>
<dbReference type="InterPro" id="IPR012677">
    <property type="entry name" value="Nucleotide-bd_a/b_plait_sf"/>
</dbReference>
<dbReference type="InterPro" id="IPR013025">
    <property type="entry name" value="Ribosomal_uL23-like"/>
</dbReference>
<dbReference type="InterPro" id="IPR012678">
    <property type="entry name" value="Ribosomal_uL23/eL15/eS24_sf"/>
</dbReference>
<dbReference type="NCBIfam" id="NF004363">
    <property type="entry name" value="PRK05738.2-4"/>
    <property type="match status" value="1"/>
</dbReference>
<dbReference type="NCBIfam" id="NF004364">
    <property type="entry name" value="PRK05738.2-5"/>
    <property type="match status" value="1"/>
</dbReference>
<dbReference type="PANTHER" id="PTHR11620">
    <property type="entry name" value="60S RIBOSOMAL PROTEIN L23A"/>
    <property type="match status" value="1"/>
</dbReference>
<dbReference type="Pfam" id="PF00276">
    <property type="entry name" value="Ribosomal_L23"/>
    <property type="match status" value="1"/>
</dbReference>
<dbReference type="SUPFAM" id="SSF54189">
    <property type="entry name" value="Ribosomal proteins S24e, L23 and L15e"/>
    <property type="match status" value="1"/>
</dbReference>
<feature type="chain" id="PRO_1000184061" description="Large ribosomal subunit protein uL23">
    <location>
        <begin position="1"/>
        <end position="101"/>
    </location>
</feature>
<name>RL23_PSECP</name>
<proteinExistence type="inferred from homology"/>
<evidence type="ECO:0000255" key="1">
    <source>
        <dbReference type="HAMAP-Rule" id="MF_01369"/>
    </source>
</evidence>
<evidence type="ECO:0000305" key="2"/>
<gene>
    <name evidence="1" type="primary">rplW</name>
    <name type="ordered locus">Achl_2685</name>
</gene>
<comment type="function">
    <text evidence="1">One of the early assembly proteins it binds 23S rRNA. One of the proteins that surrounds the polypeptide exit tunnel on the outside of the ribosome. Forms the main docking site for trigger factor binding to the ribosome.</text>
</comment>
<comment type="subunit">
    <text evidence="1">Part of the 50S ribosomal subunit. Contacts protein L29, and trigger factor when it is bound to the ribosome.</text>
</comment>
<comment type="similarity">
    <text evidence="1">Belongs to the universal ribosomal protein uL23 family.</text>
</comment>
<organism>
    <name type="scientific">Pseudarthrobacter chlorophenolicus (strain ATCC 700700 / DSM 12829 / CIP 107037 / JCM 12360 / KCTC 9906 / NCIMB 13794 / A6)</name>
    <name type="common">Arthrobacter chlorophenolicus</name>
    <dbReference type="NCBI Taxonomy" id="452863"/>
    <lineage>
        <taxon>Bacteria</taxon>
        <taxon>Bacillati</taxon>
        <taxon>Actinomycetota</taxon>
        <taxon>Actinomycetes</taxon>
        <taxon>Micrococcales</taxon>
        <taxon>Micrococcaceae</taxon>
        <taxon>Pseudarthrobacter</taxon>
    </lineage>
</organism>
<sequence length="101" mass="11181">MSAATIKDPRDVVLAPVVSEKSYGLIDEGKYTFLVDPRSNKTEIKLAVEKIFSVKVESINTINRAGKRKRTKFGWGTRKNTKRAIVTLKEGTIDIFGGPLA</sequence>